<protein>
    <recommendedName>
        <fullName>Pheromone-processing carboxypeptidase kex1</fullName>
        <ecNumber>3.4.16.6</ecNumber>
    </recommendedName>
    <alternativeName>
        <fullName>Carboxypeptidase D</fullName>
    </alternativeName>
</protein>
<comment type="function">
    <text evidence="1">Protease with a carboxypeptidase B-like function involved in the C-terminal processing of the lysine and arginine residues from protein precursors. Promotes cell fusion and is involved in the programmed cell death (By similarity).</text>
</comment>
<comment type="catalytic activity">
    <reaction>
        <text>Preferential release of a C-terminal arginine or lysine residue.</text>
        <dbReference type="EC" id="3.4.16.6"/>
    </reaction>
</comment>
<comment type="subcellular location">
    <subcellularLocation>
        <location evidence="1">Golgi apparatus</location>
        <location evidence="1">trans-Golgi network membrane</location>
        <topology evidence="1">Single-pass type I membrane protein</topology>
    </subcellularLocation>
</comment>
<comment type="similarity">
    <text evidence="4">Belongs to the peptidase S10 family.</text>
</comment>
<keyword id="KW-0053">Apoptosis</keyword>
<keyword id="KW-0121">Carboxypeptidase</keyword>
<keyword id="KW-0325">Glycoprotein</keyword>
<keyword id="KW-0333">Golgi apparatus</keyword>
<keyword id="KW-0378">Hydrolase</keyword>
<keyword id="KW-0472">Membrane</keyword>
<keyword id="KW-0645">Protease</keyword>
<keyword id="KW-1185">Reference proteome</keyword>
<keyword id="KW-0732">Signal</keyword>
<keyword id="KW-0812">Transmembrane</keyword>
<keyword id="KW-1133">Transmembrane helix</keyword>
<dbReference type="EC" id="3.4.16.6"/>
<dbReference type="EMBL" id="KE651168">
    <property type="protein sequence ID" value="EEB09601.1"/>
    <property type="molecule type" value="Genomic_DNA"/>
</dbReference>
<dbReference type="RefSeq" id="XP_002175894.1">
    <property type="nucleotide sequence ID" value="XM_002175858.2"/>
</dbReference>
<dbReference type="SMR" id="B6K7U7"/>
<dbReference type="STRING" id="402676.B6K7U7"/>
<dbReference type="ESTHER" id="schjy-kex1">
    <property type="family name" value="Carboxypeptidase_S10"/>
</dbReference>
<dbReference type="MEROPS" id="S10.A67"/>
<dbReference type="GlyCosmos" id="B6K7U7">
    <property type="glycosylation" value="7 sites, No reported glycans"/>
</dbReference>
<dbReference type="EnsemblFungi" id="EEB09601">
    <property type="protein sequence ID" value="EEB09601"/>
    <property type="gene ID" value="SJAG_04819"/>
</dbReference>
<dbReference type="GeneID" id="7049399"/>
<dbReference type="JaponicusDB" id="SJAG_04819">
    <property type="gene designation" value="kex1"/>
</dbReference>
<dbReference type="VEuPathDB" id="FungiDB:SJAG_04819"/>
<dbReference type="eggNOG" id="KOG1282">
    <property type="taxonomic scope" value="Eukaryota"/>
</dbReference>
<dbReference type="HOGENOM" id="CLU_008523_10_1_1"/>
<dbReference type="OMA" id="EMADQFV"/>
<dbReference type="OrthoDB" id="443318at2759"/>
<dbReference type="Proteomes" id="UP000001744">
    <property type="component" value="Unassembled WGS sequence"/>
</dbReference>
<dbReference type="GO" id="GO:0016020">
    <property type="term" value="C:membrane"/>
    <property type="evidence" value="ECO:0007669"/>
    <property type="project" value="UniProtKB-KW"/>
</dbReference>
<dbReference type="GO" id="GO:0005802">
    <property type="term" value="C:trans-Golgi network"/>
    <property type="evidence" value="ECO:0000318"/>
    <property type="project" value="GO_Central"/>
</dbReference>
<dbReference type="GO" id="GO:0004185">
    <property type="term" value="F:serine-type carboxypeptidase activity"/>
    <property type="evidence" value="ECO:0000318"/>
    <property type="project" value="GO_Central"/>
</dbReference>
<dbReference type="GO" id="GO:0006915">
    <property type="term" value="P:apoptotic process"/>
    <property type="evidence" value="ECO:0007669"/>
    <property type="project" value="UniProtKB-KW"/>
</dbReference>
<dbReference type="GO" id="GO:0006508">
    <property type="term" value="P:proteolysis"/>
    <property type="evidence" value="ECO:0007669"/>
    <property type="project" value="UniProtKB-KW"/>
</dbReference>
<dbReference type="Gene3D" id="3.40.50.1820">
    <property type="entry name" value="alpha/beta hydrolase"/>
    <property type="match status" value="1"/>
</dbReference>
<dbReference type="InterPro" id="IPR029058">
    <property type="entry name" value="AB_hydrolase_fold"/>
</dbReference>
<dbReference type="InterPro" id="IPR001563">
    <property type="entry name" value="Peptidase_S10"/>
</dbReference>
<dbReference type="InterPro" id="IPR033124">
    <property type="entry name" value="Ser_caboxypep_his_AS"/>
</dbReference>
<dbReference type="PANTHER" id="PTHR11802:SF190">
    <property type="entry name" value="PHEROMONE-PROCESSING CARBOXYPEPTIDASE KEX1"/>
    <property type="match status" value="1"/>
</dbReference>
<dbReference type="PANTHER" id="PTHR11802">
    <property type="entry name" value="SERINE PROTEASE FAMILY S10 SERINE CARBOXYPEPTIDASE"/>
    <property type="match status" value="1"/>
</dbReference>
<dbReference type="Pfam" id="PF00450">
    <property type="entry name" value="Peptidase_S10"/>
    <property type="match status" value="1"/>
</dbReference>
<dbReference type="PRINTS" id="PR00724">
    <property type="entry name" value="CRBOXYPTASEC"/>
</dbReference>
<dbReference type="SUPFAM" id="SSF53474">
    <property type="entry name" value="alpha/beta-Hydrolases"/>
    <property type="match status" value="1"/>
</dbReference>
<dbReference type="PROSITE" id="PS00560">
    <property type="entry name" value="CARBOXYPEPT_SER_HIS"/>
    <property type="match status" value="1"/>
</dbReference>
<evidence type="ECO:0000250" key="1"/>
<evidence type="ECO:0000255" key="2"/>
<evidence type="ECO:0000255" key="3">
    <source>
        <dbReference type="PROSITE-ProRule" id="PRU10075"/>
    </source>
</evidence>
<evidence type="ECO:0000305" key="4"/>
<organism>
    <name type="scientific">Schizosaccharomyces japonicus (strain yFS275 / FY16936)</name>
    <name type="common">Fission yeast</name>
    <dbReference type="NCBI Taxonomy" id="402676"/>
    <lineage>
        <taxon>Eukaryota</taxon>
        <taxon>Fungi</taxon>
        <taxon>Dikarya</taxon>
        <taxon>Ascomycota</taxon>
        <taxon>Taphrinomycotina</taxon>
        <taxon>Schizosaccharomycetes</taxon>
        <taxon>Schizosaccharomycetales</taxon>
        <taxon>Schizosaccharomycetaceae</taxon>
        <taxon>Schizosaccharomyces</taxon>
    </lineage>
</organism>
<sequence>MSLSFLLRVAGLFFLQFNSAQAKSQVHEQWHVSSIPNVPAGYTGSLHSGYLNLTDKLEGDLFFTLYGSENEVHQNRTIIWLNGGPGCSSEDGSMLELGPLRLTNDSLVYYNAASWVRLGNVLFVDQPMGTGFSFADTRDAILNDNEKMSNDFAYFLQEFVKAFPEYATDTWYIAGESFAGQYIPAIAKKVIDSDIVNLSGIAIGNGWIEPASHYLTYLDYLVERGLLERGSALFEALTAVQAKCLMSLEQSASGMLEDENSCDKYLFDILFSVSDKSGEFCFNMYDVTLTSPYPSCGMEWPLELPALTDFLSSPDVMKALHVASDKVSRWEECSSLVSNFYADTNVFRTRFTIAELLEEIPVMLFYGENDFLCNYVSGEFLISNLEWSGKRGFENASNADWYPRYSEANTLEYGQYAAAAGIIHSERNLTYATIRNSSHMVPYDHPYEMLALVSAFFDNDFSQILMLPDPVTIVPNHSFLSIFLWVMAGILAFSAIGAICYYSYRHIRSRYDSYTPIQEESA</sequence>
<gene>
    <name type="primary">kex1</name>
    <name type="ORF">SJAG_04819</name>
</gene>
<proteinExistence type="inferred from homology"/>
<feature type="signal peptide" evidence="2">
    <location>
        <begin position="1"/>
        <end position="22"/>
    </location>
</feature>
<feature type="chain" id="PRO_0000411944" description="Pheromone-processing carboxypeptidase kex1">
    <location>
        <begin position="23"/>
        <end position="522"/>
    </location>
</feature>
<feature type="topological domain" description="Lumenal" evidence="2">
    <location>
        <begin position="23"/>
        <end position="478"/>
    </location>
</feature>
<feature type="transmembrane region" description="Helical" evidence="2">
    <location>
        <begin position="479"/>
        <end position="499"/>
    </location>
</feature>
<feature type="topological domain" description="Cytoplasmic" evidence="2">
    <location>
        <begin position="500"/>
        <end position="522"/>
    </location>
</feature>
<feature type="active site" evidence="3">
    <location>
        <position position="177"/>
    </location>
</feature>
<feature type="active site" evidence="3">
    <location>
        <position position="370"/>
    </location>
</feature>
<feature type="active site" evidence="3">
    <location>
        <position position="439"/>
    </location>
</feature>
<feature type="glycosylation site" description="N-linked (GlcNAc...) asparagine" evidence="2">
    <location>
        <position position="52"/>
    </location>
</feature>
<feature type="glycosylation site" description="N-linked (GlcNAc...) asparagine" evidence="2">
    <location>
        <position position="75"/>
    </location>
</feature>
<feature type="glycosylation site" description="N-linked (GlcNAc...) asparagine" evidence="2">
    <location>
        <position position="104"/>
    </location>
</feature>
<feature type="glycosylation site" description="N-linked (GlcNAc...) asparagine" evidence="2">
    <location>
        <position position="197"/>
    </location>
</feature>
<feature type="glycosylation site" description="N-linked (GlcNAc...) asparagine" evidence="2">
    <location>
        <position position="395"/>
    </location>
</feature>
<feature type="glycosylation site" description="N-linked (GlcNAc...) asparagine" evidence="2">
    <location>
        <position position="428"/>
    </location>
</feature>
<feature type="glycosylation site" description="N-linked (GlcNAc...) asparagine" evidence="2">
    <location>
        <position position="436"/>
    </location>
</feature>
<accession>B6K7U7</accession>
<reference key="1">
    <citation type="journal article" date="2011" name="Science">
        <title>Comparative functional genomics of the fission yeasts.</title>
        <authorList>
            <person name="Rhind N."/>
            <person name="Chen Z."/>
            <person name="Yassour M."/>
            <person name="Thompson D.A."/>
            <person name="Haas B.J."/>
            <person name="Habib N."/>
            <person name="Wapinski I."/>
            <person name="Roy S."/>
            <person name="Lin M.F."/>
            <person name="Heiman D.I."/>
            <person name="Young S.K."/>
            <person name="Furuya K."/>
            <person name="Guo Y."/>
            <person name="Pidoux A."/>
            <person name="Chen H.M."/>
            <person name="Robbertse B."/>
            <person name="Goldberg J.M."/>
            <person name="Aoki K."/>
            <person name="Bayne E.H."/>
            <person name="Berlin A.M."/>
            <person name="Desjardins C.A."/>
            <person name="Dobbs E."/>
            <person name="Dukaj L."/>
            <person name="Fan L."/>
            <person name="FitzGerald M.G."/>
            <person name="French C."/>
            <person name="Gujja S."/>
            <person name="Hansen K."/>
            <person name="Keifenheim D."/>
            <person name="Levin J.Z."/>
            <person name="Mosher R.A."/>
            <person name="Mueller C.A."/>
            <person name="Pfiffner J."/>
            <person name="Priest M."/>
            <person name="Russ C."/>
            <person name="Smialowska A."/>
            <person name="Swoboda P."/>
            <person name="Sykes S.M."/>
            <person name="Vaughn M."/>
            <person name="Vengrova S."/>
            <person name="Yoder R."/>
            <person name="Zeng Q."/>
            <person name="Allshire R."/>
            <person name="Baulcombe D."/>
            <person name="Birren B.W."/>
            <person name="Brown W."/>
            <person name="Ekwall K."/>
            <person name="Kellis M."/>
            <person name="Leatherwood J."/>
            <person name="Levin H."/>
            <person name="Margalit H."/>
            <person name="Martienssen R."/>
            <person name="Nieduszynski C.A."/>
            <person name="Spatafora J.W."/>
            <person name="Friedman N."/>
            <person name="Dalgaard J.Z."/>
            <person name="Baumann P."/>
            <person name="Niki H."/>
            <person name="Regev A."/>
            <person name="Nusbaum C."/>
        </authorList>
    </citation>
    <scope>NUCLEOTIDE SEQUENCE [LARGE SCALE GENOMIC DNA]</scope>
    <source>
        <strain>yFS275 / FY16936</strain>
    </source>
</reference>
<name>KEX1_SCHJY</name>